<accession>Q820N3</accession>
<keyword id="KW-0067">ATP-binding</keyword>
<keyword id="KW-0173">Coenzyme A biosynthesis</keyword>
<keyword id="KW-0963">Cytoplasm</keyword>
<keyword id="KW-0460">Magnesium</keyword>
<keyword id="KW-0547">Nucleotide-binding</keyword>
<keyword id="KW-0548">Nucleotidyltransferase</keyword>
<keyword id="KW-1185">Reference proteome</keyword>
<keyword id="KW-0808">Transferase</keyword>
<comment type="function">
    <text evidence="1">Reversibly transfers an adenylyl group from ATP to 4'-phosphopantetheine, yielding dephospho-CoA (dPCoA) and pyrophosphate.</text>
</comment>
<comment type="catalytic activity">
    <reaction evidence="1">
        <text>(R)-4'-phosphopantetheine + ATP + H(+) = 3'-dephospho-CoA + diphosphate</text>
        <dbReference type="Rhea" id="RHEA:19801"/>
        <dbReference type="ChEBI" id="CHEBI:15378"/>
        <dbReference type="ChEBI" id="CHEBI:30616"/>
        <dbReference type="ChEBI" id="CHEBI:33019"/>
        <dbReference type="ChEBI" id="CHEBI:57328"/>
        <dbReference type="ChEBI" id="CHEBI:61723"/>
        <dbReference type="EC" id="2.7.7.3"/>
    </reaction>
</comment>
<comment type="cofactor">
    <cofactor evidence="1">
        <name>Mg(2+)</name>
        <dbReference type="ChEBI" id="CHEBI:18420"/>
    </cofactor>
</comment>
<comment type="pathway">
    <text evidence="1">Cofactor biosynthesis; coenzyme A biosynthesis; CoA from (R)-pantothenate: step 4/5.</text>
</comment>
<comment type="subunit">
    <text evidence="1">Homohexamer.</text>
</comment>
<comment type="subcellular location">
    <subcellularLocation>
        <location evidence="1">Cytoplasm</location>
    </subcellularLocation>
</comment>
<comment type="similarity">
    <text evidence="1">Belongs to the bacterial CoaD family.</text>
</comment>
<reference key="1">
    <citation type="journal article" date="2003" name="J. Bacteriol.">
        <title>Complete genome sequence of the ammonia-oxidizing bacterium and obligate chemolithoautotroph Nitrosomonas europaea.</title>
        <authorList>
            <person name="Chain P."/>
            <person name="Lamerdin J.E."/>
            <person name="Larimer F.W."/>
            <person name="Regala W."/>
            <person name="Lao V."/>
            <person name="Land M.L."/>
            <person name="Hauser L."/>
            <person name="Hooper A.B."/>
            <person name="Klotz M.G."/>
            <person name="Norton J."/>
            <person name="Sayavedra-Soto L.A."/>
            <person name="Arciero D.M."/>
            <person name="Hommes N.G."/>
            <person name="Whittaker M.M."/>
            <person name="Arp D.J."/>
        </authorList>
    </citation>
    <scope>NUCLEOTIDE SEQUENCE [LARGE SCALE GENOMIC DNA]</scope>
    <source>
        <strain>ATCC 19718 / CIP 103999 / KCTC 2705 / NBRC 14298</strain>
    </source>
</reference>
<protein>
    <recommendedName>
        <fullName evidence="1">Phosphopantetheine adenylyltransferase</fullName>
        <ecNumber evidence="1">2.7.7.3</ecNumber>
    </recommendedName>
    <alternativeName>
        <fullName evidence="1">Dephospho-CoA pyrophosphorylase</fullName>
    </alternativeName>
    <alternativeName>
        <fullName evidence="1">Pantetheine-phosphate adenylyltransferase</fullName>
        <shortName evidence="1">PPAT</shortName>
    </alternativeName>
</protein>
<proteinExistence type="inferred from homology"/>
<name>COAD_NITEU</name>
<dbReference type="EC" id="2.7.7.3" evidence="1"/>
<dbReference type="EMBL" id="AL954747">
    <property type="protein sequence ID" value="CAD84879.1"/>
    <property type="molecule type" value="Genomic_DNA"/>
</dbReference>
<dbReference type="SMR" id="Q820N3"/>
<dbReference type="STRING" id="228410.NE0968"/>
<dbReference type="KEGG" id="neu:NE0968"/>
<dbReference type="eggNOG" id="COG0669">
    <property type="taxonomic scope" value="Bacteria"/>
</dbReference>
<dbReference type="HOGENOM" id="CLU_100149_0_1_4"/>
<dbReference type="PhylomeDB" id="Q820N3"/>
<dbReference type="UniPathway" id="UPA00241">
    <property type="reaction ID" value="UER00355"/>
</dbReference>
<dbReference type="Proteomes" id="UP000001416">
    <property type="component" value="Chromosome"/>
</dbReference>
<dbReference type="GO" id="GO:0005737">
    <property type="term" value="C:cytoplasm"/>
    <property type="evidence" value="ECO:0007669"/>
    <property type="project" value="UniProtKB-SubCell"/>
</dbReference>
<dbReference type="GO" id="GO:0005524">
    <property type="term" value="F:ATP binding"/>
    <property type="evidence" value="ECO:0007669"/>
    <property type="project" value="UniProtKB-KW"/>
</dbReference>
<dbReference type="GO" id="GO:0004595">
    <property type="term" value="F:pantetheine-phosphate adenylyltransferase activity"/>
    <property type="evidence" value="ECO:0007669"/>
    <property type="project" value="UniProtKB-UniRule"/>
</dbReference>
<dbReference type="GO" id="GO:0015937">
    <property type="term" value="P:coenzyme A biosynthetic process"/>
    <property type="evidence" value="ECO:0007669"/>
    <property type="project" value="UniProtKB-UniRule"/>
</dbReference>
<dbReference type="CDD" id="cd02163">
    <property type="entry name" value="PPAT"/>
    <property type="match status" value="1"/>
</dbReference>
<dbReference type="Gene3D" id="3.40.50.620">
    <property type="entry name" value="HUPs"/>
    <property type="match status" value="1"/>
</dbReference>
<dbReference type="HAMAP" id="MF_00151">
    <property type="entry name" value="PPAT_bact"/>
    <property type="match status" value="1"/>
</dbReference>
<dbReference type="InterPro" id="IPR004821">
    <property type="entry name" value="Cyt_trans-like"/>
</dbReference>
<dbReference type="InterPro" id="IPR001980">
    <property type="entry name" value="PPAT"/>
</dbReference>
<dbReference type="InterPro" id="IPR014729">
    <property type="entry name" value="Rossmann-like_a/b/a_fold"/>
</dbReference>
<dbReference type="NCBIfam" id="TIGR01510">
    <property type="entry name" value="coaD_prev_kdtB"/>
    <property type="match status" value="1"/>
</dbReference>
<dbReference type="NCBIfam" id="TIGR00125">
    <property type="entry name" value="cyt_tran_rel"/>
    <property type="match status" value="1"/>
</dbReference>
<dbReference type="PANTHER" id="PTHR21342">
    <property type="entry name" value="PHOSPHOPANTETHEINE ADENYLYLTRANSFERASE"/>
    <property type="match status" value="1"/>
</dbReference>
<dbReference type="PANTHER" id="PTHR21342:SF1">
    <property type="entry name" value="PHOSPHOPANTETHEINE ADENYLYLTRANSFERASE"/>
    <property type="match status" value="1"/>
</dbReference>
<dbReference type="Pfam" id="PF01467">
    <property type="entry name" value="CTP_transf_like"/>
    <property type="match status" value="1"/>
</dbReference>
<dbReference type="PRINTS" id="PR01020">
    <property type="entry name" value="LPSBIOSNTHSS"/>
</dbReference>
<dbReference type="SUPFAM" id="SSF52374">
    <property type="entry name" value="Nucleotidylyl transferase"/>
    <property type="match status" value="1"/>
</dbReference>
<feature type="chain" id="PRO_0000156245" description="Phosphopantetheine adenylyltransferase">
    <location>
        <begin position="1"/>
        <end position="159"/>
    </location>
</feature>
<feature type="binding site" evidence="1">
    <location>
        <begin position="9"/>
        <end position="10"/>
    </location>
    <ligand>
        <name>ATP</name>
        <dbReference type="ChEBI" id="CHEBI:30616"/>
    </ligand>
</feature>
<feature type="binding site" evidence="1">
    <location>
        <position position="9"/>
    </location>
    <ligand>
        <name>substrate</name>
    </ligand>
</feature>
<feature type="binding site" evidence="1">
    <location>
        <position position="17"/>
    </location>
    <ligand>
        <name>ATP</name>
        <dbReference type="ChEBI" id="CHEBI:30616"/>
    </ligand>
</feature>
<feature type="binding site" evidence="1">
    <location>
        <position position="41"/>
    </location>
    <ligand>
        <name>substrate</name>
    </ligand>
</feature>
<feature type="binding site" evidence="1">
    <location>
        <position position="73"/>
    </location>
    <ligand>
        <name>substrate</name>
    </ligand>
</feature>
<feature type="binding site" evidence="1">
    <location>
        <position position="87"/>
    </location>
    <ligand>
        <name>substrate</name>
    </ligand>
</feature>
<feature type="binding site" evidence="1">
    <location>
        <begin position="88"/>
        <end position="90"/>
    </location>
    <ligand>
        <name>ATP</name>
        <dbReference type="ChEBI" id="CHEBI:30616"/>
    </ligand>
</feature>
<feature type="binding site" evidence="1">
    <location>
        <position position="98"/>
    </location>
    <ligand>
        <name>ATP</name>
        <dbReference type="ChEBI" id="CHEBI:30616"/>
    </ligand>
</feature>
<feature type="binding site" evidence="1">
    <location>
        <begin position="123"/>
        <end position="129"/>
    </location>
    <ligand>
        <name>ATP</name>
        <dbReference type="ChEBI" id="CHEBI:30616"/>
    </ligand>
</feature>
<feature type="site" description="Transition state stabilizer" evidence="1">
    <location>
        <position position="17"/>
    </location>
</feature>
<evidence type="ECO:0000255" key="1">
    <source>
        <dbReference type="HAMAP-Rule" id="MF_00151"/>
    </source>
</evidence>
<sequence>MDKVIYPGTFDPITRGHEDLIQRASRLFDQVVVAVAANSGKSPCFSLEERVEMARAVLAEYANVEVTGFSGLLMEFTRQQQAHVIVRGLRAVSDFEYEFQLAGMNRSLYPDVETIFLTPSEQYMFISATIVREIARLGGDASKFVHPLVAERLYEKRKK</sequence>
<gene>
    <name evidence="1" type="primary">coaD</name>
    <name type="ordered locus">NE0968</name>
</gene>
<organism>
    <name type="scientific">Nitrosomonas europaea (strain ATCC 19718 / CIP 103999 / KCTC 2705 / NBRC 14298)</name>
    <dbReference type="NCBI Taxonomy" id="228410"/>
    <lineage>
        <taxon>Bacteria</taxon>
        <taxon>Pseudomonadati</taxon>
        <taxon>Pseudomonadota</taxon>
        <taxon>Betaproteobacteria</taxon>
        <taxon>Nitrosomonadales</taxon>
        <taxon>Nitrosomonadaceae</taxon>
        <taxon>Nitrosomonas</taxon>
    </lineage>
</organism>